<gene>
    <name evidence="1" type="primary">rpsK</name>
    <name type="ordered locus">BQ08000</name>
</gene>
<name>RS11_BARQU</name>
<proteinExistence type="inferred from homology"/>
<evidence type="ECO:0000255" key="1">
    <source>
        <dbReference type="HAMAP-Rule" id="MF_01310"/>
    </source>
</evidence>
<evidence type="ECO:0000305" key="2"/>
<dbReference type="EMBL" id="BX897700">
    <property type="protein sequence ID" value="CAF26283.1"/>
    <property type="molecule type" value="Genomic_DNA"/>
</dbReference>
<dbReference type="RefSeq" id="WP_011179530.1">
    <property type="nucleotide sequence ID" value="NC_005955.1"/>
</dbReference>
<dbReference type="SMR" id="Q6FZE5"/>
<dbReference type="KEGG" id="bqu:BQ08000"/>
<dbReference type="eggNOG" id="COG0100">
    <property type="taxonomic scope" value="Bacteria"/>
</dbReference>
<dbReference type="HOGENOM" id="CLU_072439_5_0_5"/>
<dbReference type="OrthoDB" id="9806415at2"/>
<dbReference type="Proteomes" id="UP000000597">
    <property type="component" value="Chromosome"/>
</dbReference>
<dbReference type="GO" id="GO:1990904">
    <property type="term" value="C:ribonucleoprotein complex"/>
    <property type="evidence" value="ECO:0007669"/>
    <property type="project" value="UniProtKB-KW"/>
</dbReference>
<dbReference type="GO" id="GO:0005840">
    <property type="term" value="C:ribosome"/>
    <property type="evidence" value="ECO:0007669"/>
    <property type="project" value="UniProtKB-KW"/>
</dbReference>
<dbReference type="GO" id="GO:0019843">
    <property type="term" value="F:rRNA binding"/>
    <property type="evidence" value="ECO:0007669"/>
    <property type="project" value="UniProtKB-UniRule"/>
</dbReference>
<dbReference type="GO" id="GO:0003735">
    <property type="term" value="F:structural constituent of ribosome"/>
    <property type="evidence" value="ECO:0007669"/>
    <property type="project" value="InterPro"/>
</dbReference>
<dbReference type="GO" id="GO:0006412">
    <property type="term" value="P:translation"/>
    <property type="evidence" value="ECO:0007669"/>
    <property type="project" value="UniProtKB-UniRule"/>
</dbReference>
<dbReference type="FunFam" id="3.30.420.80:FF:000001">
    <property type="entry name" value="30S ribosomal protein S11"/>
    <property type="match status" value="1"/>
</dbReference>
<dbReference type="Gene3D" id="3.30.420.80">
    <property type="entry name" value="Ribosomal protein S11"/>
    <property type="match status" value="1"/>
</dbReference>
<dbReference type="HAMAP" id="MF_01310">
    <property type="entry name" value="Ribosomal_uS11"/>
    <property type="match status" value="1"/>
</dbReference>
<dbReference type="InterPro" id="IPR001971">
    <property type="entry name" value="Ribosomal_uS11"/>
</dbReference>
<dbReference type="InterPro" id="IPR019981">
    <property type="entry name" value="Ribosomal_uS11_bac-type"/>
</dbReference>
<dbReference type="InterPro" id="IPR018102">
    <property type="entry name" value="Ribosomal_uS11_CS"/>
</dbReference>
<dbReference type="InterPro" id="IPR036967">
    <property type="entry name" value="Ribosomal_uS11_sf"/>
</dbReference>
<dbReference type="NCBIfam" id="NF003698">
    <property type="entry name" value="PRK05309.1"/>
    <property type="match status" value="1"/>
</dbReference>
<dbReference type="NCBIfam" id="TIGR03632">
    <property type="entry name" value="uS11_bact"/>
    <property type="match status" value="1"/>
</dbReference>
<dbReference type="PANTHER" id="PTHR11759">
    <property type="entry name" value="40S RIBOSOMAL PROTEIN S14/30S RIBOSOMAL PROTEIN S11"/>
    <property type="match status" value="1"/>
</dbReference>
<dbReference type="Pfam" id="PF00411">
    <property type="entry name" value="Ribosomal_S11"/>
    <property type="match status" value="1"/>
</dbReference>
<dbReference type="PIRSF" id="PIRSF002131">
    <property type="entry name" value="Ribosomal_S11"/>
    <property type="match status" value="1"/>
</dbReference>
<dbReference type="SUPFAM" id="SSF53137">
    <property type="entry name" value="Translational machinery components"/>
    <property type="match status" value="1"/>
</dbReference>
<dbReference type="PROSITE" id="PS00054">
    <property type="entry name" value="RIBOSOMAL_S11"/>
    <property type="match status" value="1"/>
</dbReference>
<organism>
    <name type="scientific">Bartonella quintana (strain Toulouse)</name>
    <name type="common">Rochalimaea quintana</name>
    <dbReference type="NCBI Taxonomy" id="283165"/>
    <lineage>
        <taxon>Bacteria</taxon>
        <taxon>Pseudomonadati</taxon>
        <taxon>Pseudomonadota</taxon>
        <taxon>Alphaproteobacteria</taxon>
        <taxon>Hyphomicrobiales</taxon>
        <taxon>Bartonellaceae</taxon>
        <taxon>Bartonella</taxon>
    </lineage>
</organism>
<reference key="1">
    <citation type="journal article" date="2004" name="Proc. Natl. Acad. Sci. U.S.A.">
        <title>The louse-borne human pathogen Bartonella quintana is a genomic derivative of the zoonotic agent Bartonella henselae.</title>
        <authorList>
            <person name="Alsmark U.C.M."/>
            <person name="Frank A.C."/>
            <person name="Karlberg E.O."/>
            <person name="Legault B.-A."/>
            <person name="Ardell D.H."/>
            <person name="Canbaeck B."/>
            <person name="Eriksson A.-S."/>
            <person name="Naeslund A.K."/>
            <person name="Handley S.A."/>
            <person name="Huvet M."/>
            <person name="La Scola B."/>
            <person name="Holmberg M."/>
            <person name="Andersson S.G.E."/>
        </authorList>
    </citation>
    <scope>NUCLEOTIDE SEQUENCE [LARGE SCALE GENOMIC DNA]</scope>
    <source>
        <strain>Toulouse</strain>
    </source>
</reference>
<sequence>MAKQATRVRRRERKNILSGVVHINSTFNNTMVTITDAQGNAIAWSSAGAQGFKGSRKSTPFAAQVAAEDCARKAQEHGMRSLEVEVCGPGAGRESALRALQSAGFVITSIRDVTPIPHNGCRPRKRRRV</sequence>
<comment type="function">
    <text evidence="1">Located on the platform of the 30S subunit, it bridges several disparate RNA helices of the 16S rRNA. Forms part of the Shine-Dalgarno cleft in the 70S ribosome.</text>
</comment>
<comment type="subunit">
    <text evidence="1">Part of the 30S ribosomal subunit. Interacts with proteins S7 and S18. Binds to IF-3.</text>
</comment>
<comment type="similarity">
    <text evidence="1">Belongs to the universal ribosomal protein uS11 family.</text>
</comment>
<feature type="chain" id="PRO_0000123109" description="Small ribosomal subunit protein uS11">
    <location>
        <begin position="1"/>
        <end position="129"/>
    </location>
</feature>
<keyword id="KW-0687">Ribonucleoprotein</keyword>
<keyword id="KW-0689">Ribosomal protein</keyword>
<keyword id="KW-0694">RNA-binding</keyword>
<keyword id="KW-0699">rRNA-binding</keyword>
<protein>
    <recommendedName>
        <fullName evidence="1">Small ribosomal subunit protein uS11</fullName>
    </recommendedName>
    <alternativeName>
        <fullName evidence="2">30S ribosomal protein S11</fullName>
    </alternativeName>
</protein>
<accession>Q6FZE5</accession>